<proteinExistence type="inferred from homology"/>
<name>CAMP_PAPPA</name>
<organism>
    <name type="scientific">Papio papio</name>
    <name type="common">Guinea baboon</name>
    <name type="synonym">Cynocephalus papio</name>
    <dbReference type="NCBI Taxonomy" id="100937"/>
    <lineage>
        <taxon>Eukaryota</taxon>
        <taxon>Metazoa</taxon>
        <taxon>Chordata</taxon>
        <taxon>Craniata</taxon>
        <taxon>Vertebrata</taxon>
        <taxon>Euteleostomi</taxon>
        <taxon>Mammalia</taxon>
        <taxon>Eutheria</taxon>
        <taxon>Euarchontoglires</taxon>
        <taxon>Primates</taxon>
        <taxon>Haplorrhini</taxon>
        <taxon>Catarrhini</taxon>
        <taxon>Cercopithecidae</taxon>
        <taxon>Cercopithecinae</taxon>
        <taxon>Papio</taxon>
    </lineage>
</organism>
<gene>
    <name evidence="1" type="primary">CAMP</name>
</gene>
<sequence length="170" mass="18952">MKTQRDSPSLGRWSLVLLLLGLVMPLAIVAQVLSYQEAVLRAIDGINQRSSDANLYRLLDLDPRPTMDGDPDTPKPVSFTVKETVCPRTTQKSPEDCDFKEDGLVKRCVGTVILNQARDSFDISCDKDNRRFARLGNFFRKVKEKIGGGLKKVGQKIKDFLGNLVPRTAS</sequence>
<dbReference type="EMBL" id="DQ471369">
    <property type="protein sequence ID" value="ABE96633.1"/>
    <property type="molecule type" value="Genomic_DNA"/>
</dbReference>
<dbReference type="SMR" id="Q1KLX3"/>
<dbReference type="GO" id="GO:0005615">
    <property type="term" value="C:extracellular space"/>
    <property type="evidence" value="ECO:0007669"/>
    <property type="project" value="TreeGrafter"/>
</dbReference>
<dbReference type="GO" id="GO:0031982">
    <property type="term" value="C:vesicle"/>
    <property type="evidence" value="ECO:0007669"/>
    <property type="project" value="UniProtKB-SubCell"/>
</dbReference>
<dbReference type="GO" id="GO:0001530">
    <property type="term" value="F:lipopolysaccharide binding"/>
    <property type="evidence" value="ECO:0007669"/>
    <property type="project" value="TreeGrafter"/>
</dbReference>
<dbReference type="GO" id="GO:0061844">
    <property type="term" value="P:antimicrobial humoral immune response mediated by antimicrobial peptide"/>
    <property type="evidence" value="ECO:0007669"/>
    <property type="project" value="TreeGrafter"/>
</dbReference>
<dbReference type="GO" id="GO:0050829">
    <property type="term" value="P:defense response to Gram-negative bacterium"/>
    <property type="evidence" value="ECO:0007669"/>
    <property type="project" value="TreeGrafter"/>
</dbReference>
<dbReference type="GO" id="GO:0050830">
    <property type="term" value="P:defense response to Gram-positive bacterium"/>
    <property type="evidence" value="ECO:0007669"/>
    <property type="project" value="TreeGrafter"/>
</dbReference>
<dbReference type="GO" id="GO:0045087">
    <property type="term" value="P:innate immune response"/>
    <property type="evidence" value="ECO:0007669"/>
    <property type="project" value="UniProtKB-KW"/>
</dbReference>
<dbReference type="GO" id="GO:0042119">
    <property type="term" value="P:neutrophil activation"/>
    <property type="evidence" value="ECO:0000250"/>
    <property type="project" value="UniProtKB"/>
</dbReference>
<dbReference type="FunFam" id="3.10.450.10:FF:000003">
    <property type="entry name" value="Cathelicidin antimicrobial peptide"/>
    <property type="match status" value="1"/>
</dbReference>
<dbReference type="Gene3D" id="3.10.450.10">
    <property type="match status" value="1"/>
</dbReference>
<dbReference type="InterPro" id="IPR001894">
    <property type="entry name" value="Cathelicidin-like"/>
</dbReference>
<dbReference type="InterPro" id="IPR018216">
    <property type="entry name" value="Cathelicidin_CS"/>
</dbReference>
<dbReference type="InterPro" id="IPR022746">
    <property type="entry name" value="Cathlecidin_C"/>
</dbReference>
<dbReference type="InterPro" id="IPR046350">
    <property type="entry name" value="Cystatin_sf"/>
</dbReference>
<dbReference type="PANTHER" id="PTHR10206">
    <property type="entry name" value="CATHELICIDIN"/>
    <property type="match status" value="1"/>
</dbReference>
<dbReference type="PANTHER" id="PTHR10206:SF2">
    <property type="entry name" value="CATHELICIDIN ANTIMICROBIAL PEPTIDE"/>
    <property type="match status" value="1"/>
</dbReference>
<dbReference type="Pfam" id="PF12153">
    <property type="entry name" value="CAP18_C"/>
    <property type="match status" value="1"/>
</dbReference>
<dbReference type="Pfam" id="PF00666">
    <property type="entry name" value="Cathelicidins"/>
    <property type="match status" value="1"/>
</dbReference>
<dbReference type="SUPFAM" id="SSF54403">
    <property type="entry name" value="Cystatin/monellin"/>
    <property type="match status" value="1"/>
</dbReference>
<dbReference type="PROSITE" id="PS00946">
    <property type="entry name" value="CATHELICIDINS_1"/>
    <property type="match status" value="1"/>
</dbReference>
<dbReference type="PROSITE" id="PS00947">
    <property type="entry name" value="CATHELICIDINS_2"/>
    <property type="match status" value="1"/>
</dbReference>
<evidence type="ECO:0000250" key="1">
    <source>
        <dbReference type="UniProtKB" id="P49913"/>
    </source>
</evidence>
<evidence type="ECO:0000250" key="2">
    <source>
        <dbReference type="UniProtKB" id="P54229"/>
    </source>
</evidence>
<evidence type="ECO:0000255" key="3"/>
<evidence type="ECO:0000305" key="4"/>
<comment type="function">
    <text evidence="1">Antimicrobial protein that is an integral component of the innate immune system (By similarity). Binds to bacterial lipopolysaccharides (LPS) (By similarity). Acts via neutrophil N-formyl peptide receptors to enhance the release of CXCL2 (By similarity). Postsecretory processing generates multiple cathelicidin antimicrobial peptides with various lengths which act as a topical antimicrobial defense in sweat on skin (By similarity). The unprocessed precursor form, cathelicidin antimicrobial peptide, inhibits the growth of Gram-negative E.coli and E.aerogenes with efficiencies comparable to that of the mature peptide LL-37 (in vitro) (By similarity).</text>
</comment>
<comment type="function">
    <molecule>Antibacterial peptide LL-37</molecule>
    <text evidence="1">Antimicrobial peptide that is an integral component of the innate immune system (By similarity). Binds to bacterial lipopolysaccharides (LPS) (By similarity). Causes membrane permeabilization by forming transmembrane pores (in vitro) (By similarity). Causes lysis of E.coli (By similarity). Exhibits antimicrobial activity against Gram-negative bacteria such as P.aeruginosa, S.typhimurium, E.aerogenes, E.coli and P.syringae, Gram-positive bacteria such as L.monocytogenes, S.epidermidis, S.pyogenes and S.aureus, as well as vancomycin-resistant enterococci (in vitro) (By similarity). Exhibits antimicrobial activity against methicillin-resistant S.aureus, P.mirabilis, and C.albicans in low-salt media, but not in media containing 100 mM NaCl (in vitro) (By similarity). Forms chiral supramolecular assemblies with quinolone signal (PQS) molecules of P.aeruginosa, which may lead to interference of bacterial quorum signaling and perturbance of bacterial biofilm formation (By similarity). May form supramolecular fiber-like assemblies on bacterial membranes (By similarity). Induces cytokine and chemokine producation as well as TNF/TNFA and CSF2/GMCSF production in normal human keratinocytes (By similarity). Exhibits hemolytic activity against red blood cells (By similarity).</text>
</comment>
<comment type="function">
    <molecule>Antibacterial peptide FALL-39</molecule>
    <text evidence="1">Exhibits antimicrobial activity against E.coli and B.megaterium (in vitro).</text>
</comment>
<comment type="subunit">
    <molecule>Antibacterial peptide LL-37</molecule>
    <text evidence="1">Monomer, homodimer or homotrimer (in vitro) (By similarity). Oligomerizes as tetra- or hexamer in solution (in vitro) (By similarity).</text>
</comment>
<comment type="subcellular location">
    <subcellularLocation>
        <location evidence="2">Secreted</location>
    </subcellularLocation>
    <subcellularLocation>
        <location evidence="2">Vesicle</location>
    </subcellularLocation>
    <text evidence="2">Stored as pro-peptide in granules and phagolysosomes of neutrophils (By similarity). Secreted in sweat onto skin (By similarity).</text>
</comment>
<comment type="domain">
    <text evidence="2">The cathelin-like domain (CLD), which is the propeptide part, does not seem to exhibit auto-inhibitory function, as it does not inhibit the antibacterial activity of antibacterial peptide LL-37.</text>
</comment>
<comment type="domain">
    <molecule>Antibacterial peptide LL-37</molecule>
    <text evidence="2">Undergoes conformational change in the presence of lipid A, transitioning from a random coil to an alpha-helical structure.</text>
</comment>
<comment type="domain">
    <molecule>Antibacterial peptide LL-37</molecule>
    <text evidence="2">Residues 17-29 of LL-37 represent the active core of the antimicrobial peptide. Forms ribbon-like fibrils and exhibits antibacterial activity against Gram-positive M.luteus (By similarity). Also exhibits antibacterial activity against Gram-negative E.coli and P.fluorescens (By similarity).</text>
</comment>
<comment type="PTM">
    <text evidence="1">Proteolytically cleaved by proteinase PRTN3 into antibacterial peptide LL-37 (By similarity). Proteolytically cleaved by cathepsin CTSG and neutrophil elastase ELANE (By similarity).</text>
</comment>
<comment type="PTM">
    <molecule>Antibacterial peptide LL-37</molecule>
    <text evidence="1">Resistant to proteolytic degradation in solution, and when bound to both zwitterionic (mimicking mammalian membranes) and negatively charged membranes (mimicking bacterial membranes).</text>
</comment>
<comment type="PTM">
    <text evidence="1">After secretion onto the skin surface, the CAMP gene product is processed by a serine protease-dependent mechanism into multiple novel antimicrobial peptides distinct from and shorter than cathelicidin LL-37 (By similarity). These peptides show enhanced antimicrobial action, acquiring the ability to kill skin pathogens such as S.aureus, E.coli and C.albicans. These peptides have lost the ability to stimulate CXCL8/IL8 release from keratinocytes (By similarity). The peptides act synergistically, killing bacteria at lower concentrations when present together, and maintain activity at increased salt condition (By similarity).</text>
</comment>
<comment type="similarity">
    <text evidence="4">Belongs to the cathelicidin family.</text>
</comment>
<reference key="1">
    <citation type="journal article" date="2006" name="J. Biol. Chem.">
        <title>Evolution of the primate cathelicidin. Correlation between structural variations and antimicrobial activity.</title>
        <authorList>
            <person name="Zelezetsky I."/>
            <person name="Pontillo A."/>
            <person name="Puzzi L."/>
            <person name="Antcheva N."/>
            <person name="Segat L."/>
            <person name="Pacor S."/>
            <person name="Crovella S."/>
            <person name="Tossi A."/>
        </authorList>
    </citation>
    <scope>NUCLEOTIDE SEQUENCE [GENOMIC DNA]</scope>
</reference>
<feature type="signal peptide" evidence="3">
    <location>
        <begin position="1"/>
        <end position="30"/>
    </location>
</feature>
<feature type="propeptide" id="PRO_0000251779" description="Cathelin-like domain (CLD)" evidence="1">
    <location>
        <begin position="31"/>
        <end position="131"/>
    </location>
</feature>
<feature type="peptide" id="PRO_0000251780" description="Antibacterial peptide FALL-39" evidence="1">
    <location>
        <begin position="132"/>
        <end position="170"/>
    </location>
</feature>
<feature type="peptide" id="PRO_0000251781" description="Antibacterial peptide LL-37" evidence="1">
    <location>
        <begin position="134"/>
        <end position="170"/>
    </location>
</feature>
<feature type="region of interest" description="Active core" evidence="1">
    <location>
        <begin position="150"/>
        <end position="162"/>
    </location>
</feature>
<feature type="disulfide bond" evidence="1">
    <location>
        <begin position="86"/>
        <end position="97"/>
    </location>
</feature>
<feature type="disulfide bond" evidence="1">
    <location>
        <begin position="108"/>
        <end position="125"/>
    </location>
</feature>
<protein>
    <recommendedName>
        <fullName evidence="1">Cathelicidin antimicrobial peptide</fullName>
    </recommendedName>
    <component>
        <recommendedName>
            <fullName evidence="1">Antibacterial peptide FALL-39</fullName>
        </recommendedName>
        <alternativeName>
            <fullName evidence="1">FALL-39 peptide antibiotic</fullName>
        </alternativeName>
    </component>
    <component>
        <recommendedName>
            <fullName evidence="1">Antibacterial peptide LL-37</fullName>
        </recommendedName>
    </component>
</protein>
<accession>Q1KLX3</accession>
<keyword id="KW-0044">Antibiotic</keyword>
<keyword id="KW-0929">Antimicrobial</keyword>
<keyword id="KW-0165">Cleavage on pair of basic residues</keyword>
<keyword id="KW-1015">Disulfide bond</keyword>
<keyword id="KW-0391">Immunity</keyword>
<keyword id="KW-0399">Innate immunity</keyword>
<keyword id="KW-0964">Secreted</keyword>
<keyword id="KW-0732">Signal</keyword>